<sequence length="419" mass="44805">MDKLKIEASEALAGNVVISGAKNAALPILMAGVLAETDFVVTNVPNLRDVNTSCELLRCLGAEVTRSDNSEVRISTSSLDHFCAPYDLVKTMRASILILGPLLARFGTADVSLPGGCAIGARPVNLHLHGLEQMGAKIEVEEGYIKARVDGRLKGAHIFMDMVSVGATENLLMAATLADGETIIENAAREPEVIDLANCLIAMGAKIEGAGTDSIRIQGVESLNGCHYRVMPDRIETGSFLIAAAVTRGKIRCVDADPSTLEAVLAKLEDAGATITTGSDWIELDMQGKRPKAVNIKTVPYPGFPTDMQAQFCLLNVLAEGTSTITETIFENRFMHVPELIRMGANMELEGNTCIIQGIERLNGAQVMATDLRASASLVIAGLVAEGTTIVDRIYHLDRGYEHIEDKFKGLGGQVVRVS</sequence>
<keyword id="KW-0131">Cell cycle</keyword>
<keyword id="KW-0132">Cell division</keyword>
<keyword id="KW-0133">Cell shape</keyword>
<keyword id="KW-0961">Cell wall biogenesis/degradation</keyword>
<keyword id="KW-0963">Cytoplasm</keyword>
<keyword id="KW-0573">Peptidoglycan synthesis</keyword>
<keyword id="KW-0670">Pyruvate</keyword>
<keyword id="KW-1185">Reference proteome</keyword>
<keyword id="KW-0808">Transferase</keyword>
<accession>B1KII7</accession>
<reference key="1">
    <citation type="submission" date="2008-02" db="EMBL/GenBank/DDBJ databases">
        <title>Complete sequence of Shewanella woodyi ATCC 51908.</title>
        <authorList>
            <consortium name="US DOE Joint Genome Institute"/>
            <person name="Copeland A."/>
            <person name="Lucas S."/>
            <person name="Lapidus A."/>
            <person name="Glavina del Rio T."/>
            <person name="Dalin E."/>
            <person name="Tice H."/>
            <person name="Bruce D."/>
            <person name="Goodwin L."/>
            <person name="Pitluck S."/>
            <person name="Sims D."/>
            <person name="Brettin T."/>
            <person name="Detter J.C."/>
            <person name="Han C."/>
            <person name="Kuske C.R."/>
            <person name="Schmutz J."/>
            <person name="Larimer F."/>
            <person name="Land M."/>
            <person name="Hauser L."/>
            <person name="Kyrpides N."/>
            <person name="Lykidis A."/>
            <person name="Zhao J.-S."/>
            <person name="Richardson P."/>
        </authorList>
    </citation>
    <scope>NUCLEOTIDE SEQUENCE [LARGE SCALE GENOMIC DNA]</scope>
    <source>
        <strain>ATCC 51908 / MS32</strain>
    </source>
</reference>
<proteinExistence type="inferred from homology"/>
<comment type="function">
    <text evidence="1">Cell wall formation. Adds enolpyruvyl to UDP-N-acetylglucosamine.</text>
</comment>
<comment type="catalytic activity">
    <reaction evidence="1">
        <text>phosphoenolpyruvate + UDP-N-acetyl-alpha-D-glucosamine = UDP-N-acetyl-3-O-(1-carboxyvinyl)-alpha-D-glucosamine + phosphate</text>
        <dbReference type="Rhea" id="RHEA:18681"/>
        <dbReference type="ChEBI" id="CHEBI:43474"/>
        <dbReference type="ChEBI" id="CHEBI:57705"/>
        <dbReference type="ChEBI" id="CHEBI:58702"/>
        <dbReference type="ChEBI" id="CHEBI:68483"/>
        <dbReference type="EC" id="2.5.1.7"/>
    </reaction>
</comment>
<comment type="pathway">
    <text evidence="1">Cell wall biogenesis; peptidoglycan biosynthesis.</text>
</comment>
<comment type="subcellular location">
    <subcellularLocation>
        <location evidence="1">Cytoplasm</location>
    </subcellularLocation>
</comment>
<comment type="similarity">
    <text evidence="1">Belongs to the EPSP synthase family. MurA subfamily.</text>
</comment>
<feature type="chain" id="PRO_1000094724" description="UDP-N-acetylglucosamine 1-carboxyvinyltransferase">
    <location>
        <begin position="1"/>
        <end position="419"/>
    </location>
</feature>
<feature type="active site" description="Proton donor" evidence="1">
    <location>
        <position position="117"/>
    </location>
</feature>
<feature type="binding site" evidence="1">
    <location>
        <begin position="22"/>
        <end position="23"/>
    </location>
    <ligand>
        <name>phosphoenolpyruvate</name>
        <dbReference type="ChEBI" id="CHEBI:58702"/>
    </ligand>
</feature>
<feature type="binding site" evidence="1">
    <location>
        <position position="93"/>
    </location>
    <ligand>
        <name>UDP-N-acetyl-alpha-D-glucosamine</name>
        <dbReference type="ChEBI" id="CHEBI:57705"/>
    </ligand>
</feature>
<feature type="binding site" evidence="1">
    <location>
        <position position="307"/>
    </location>
    <ligand>
        <name>UDP-N-acetyl-alpha-D-glucosamine</name>
        <dbReference type="ChEBI" id="CHEBI:57705"/>
    </ligand>
</feature>
<feature type="binding site" evidence="1">
    <location>
        <position position="329"/>
    </location>
    <ligand>
        <name>UDP-N-acetyl-alpha-D-glucosamine</name>
        <dbReference type="ChEBI" id="CHEBI:57705"/>
    </ligand>
</feature>
<feature type="modified residue" description="2-(S-cysteinyl)pyruvic acid O-phosphothioketal" evidence="1">
    <location>
        <position position="117"/>
    </location>
</feature>
<name>MURA_SHEWM</name>
<dbReference type="EC" id="2.5.1.7" evidence="1"/>
<dbReference type="EMBL" id="CP000961">
    <property type="protein sequence ID" value="ACA88483.1"/>
    <property type="molecule type" value="Genomic_DNA"/>
</dbReference>
<dbReference type="RefSeq" id="WP_012326810.1">
    <property type="nucleotide sequence ID" value="NC_010506.1"/>
</dbReference>
<dbReference type="SMR" id="B1KII7"/>
<dbReference type="STRING" id="392500.Swoo_4227"/>
<dbReference type="KEGG" id="swd:Swoo_4227"/>
<dbReference type="eggNOG" id="COG0766">
    <property type="taxonomic scope" value="Bacteria"/>
</dbReference>
<dbReference type="HOGENOM" id="CLU_027387_0_0_6"/>
<dbReference type="UniPathway" id="UPA00219"/>
<dbReference type="Proteomes" id="UP000002168">
    <property type="component" value="Chromosome"/>
</dbReference>
<dbReference type="GO" id="GO:0005737">
    <property type="term" value="C:cytoplasm"/>
    <property type="evidence" value="ECO:0007669"/>
    <property type="project" value="UniProtKB-SubCell"/>
</dbReference>
<dbReference type="GO" id="GO:0008760">
    <property type="term" value="F:UDP-N-acetylglucosamine 1-carboxyvinyltransferase activity"/>
    <property type="evidence" value="ECO:0007669"/>
    <property type="project" value="UniProtKB-UniRule"/>
</dbReference>
<dbReference type="GO" id="GO:0051301">
    <property type="term" value="P:cell division"/>
    <property type="evidence" value="ECO:0007669"/>
    <property type="project" value="UniProtKB-KW"/>
</dbReference>
<dbReference type="GO" id="GO:0071555">
    <property type="term" value="P:cell wall organization"/>
    <property type="evidence" value="ECO:0007669"/>
    <property type="project" value="UniProtKB-KW"/>
</dbReference>
<dbReference type="GO" id="GO:0009252">
    <property type="term" value="P:peptidoglycan biosynthetic process"/>
    <property type="evidence" value="ECO:0007669"/>
    <property type="project" value="UniProtKB-UniRule"/>
</dbReference>
<dbReference type="GO" id="GO:0008360">
    <property type="term" value="P:regulation of cell shape"/>
    <property type="evidence" value="ECO:0007669"/>
    <property type="project" value="UniProtKB-KW"/>
</dbReference>
<dbReference type="GO" id="GO:0019277">
    <property type="term" value="P:UDP-N-acetylgalactosamine biosynthetic process"/>
    <property type="evidence" value="ECO:0007669"/>
    <property type="project" value="InterPro"/>
</dbReference>
<dbReference type="CDD" id="cd01555">
    <property type="entry name" value="UdpNAET"/>
    <property type="match status" value="1"/>
</dbReference>
<dbReference type="FunFam" id="3.65.10.10:FF:000002">
    <property type="entry name" value="UDP-N-acetylglucosamine 1-carboxyvinyltransferase"/>
    <property type="match status" value="1"/>
</dbReference>
<dbReference type="Gene3D" id="3.65.10.10">
    <property type="entry name" value="Enolpyruvate transferase domain"/>
    <property type="match status" value="2"/>
</dbReference>
<dbReference type="HAMAP" id="MF_00111">
    <property type="entry name" value="MurA"/>
    <property type="match status" value="1"/>
</dbReference>
<dbReference type="InterPro" id="IPR001986">
    <property type="entry name" value="Enolpyruvate_Tfrase_dom"/>
</dbReference>
<dbReference type="InterPro" id="IPR036968">
    <property type="entry name" value="Enolpyruvate_Tfrase_sf"/>
</dbReference>
<dbReference type="InterPro" id="IPR050068">
    <property type="entry name" value="MurA_subfamily"/>
</dbReference>
<dbReference type="InterPro" id="IPR013792">
    <property type="entry name" value="RNA3'P_cycl/enolpyr_Trfase_a/b"/>
</dbReference>
<dbReference type="InterPro" id="IPR005750">
    <property type="entry name" value="UDP_GlcNAc_COvinyl_MurA"/>
</dbReference>
<dbReference type="NCBIfam" id="TIGR01072">
    <property type="entry name" value="murA"/>
    <property type="match status" value="1"/>
</dbReference>
<dbReference type="NCBIfam" id="NF006873">
    <property type="entry name" value="PRK09369.1"/>
    <property type="match status" value="1"/>
</dbReference>
<dbReference type="PANTHER" id="PTHR43783">
    <property type="entry name" value="UDP-N-ACETYLGLUCOSAMINE 1-CARBOXYVINYLTRANSFERASE"/>
    <property type="match status" value="1"/>
</dbReference>
<dbReference type="PANTHER" id="PTHR43783:SF1">
    <property type="entry name" value="UDP-N-ACETYLGLUCOSAMINE 1-CARBOXYVINYLTRANSFERASE"/>
    <property type="match status" value="1"/>
</dbReference>
<dbReference type="Pfam" id="PF00275">
    <property type="entry name" value="EPSP_synthase"/>
    <property type="match status" value="1"/>
</dbReference>
<dbReference type="SUPFAM" id="SSF55205">
    <property type="entry name" value="EPT/RTPC-like"/>
    <property type="match status" value="1"/>
</dbReference>
<evidence type="ECO:0000255" key="1">
    <source>
        <dbReference type="HAMAP-Rule" id="MF_00111"/>
    </source>
</evidence>
<gene>
    <name evidence="1" type="primary">murA</name>
    <name type="ordered locus">Swoo_4227</name>
</gene>
<organism>
    <name type="scientific">Shewanella woodyi (strain ATCC 51908 / MS32)</name>
    <dbReference type="NCBI Taxonomy" id="392500"/>
    <lineage>
        <taxon>Bacteria</taxon>
        <taxon>Pseudomonadati</taxon>
        <taxon>Pseudomonadota</taxon>
        <taxon>Gammaproteobacteria</taxon>
        <taxon>Alteromonadales</taxon>
        <taxon>Shewanellaceae</taxon>
        <taxon>Shewanella</taxon>
    </lineage>
</organism>
<protein>
    <recommendedName>
        <fullName evidence="1">UDP-N-acetylglucosamine 1-carboxyvinyltransferase</fullName>
        <ecNumber evidence="1">2.5.1.7</ecNumber>
    </recommendedName>
    <alternativeName>
        <fullName evidence="1">Enoylpyruvate transferase</fullName>
    </alternativeName>
    <alternativeName>
        <fullName evidence="1">UDP-N-acetylglucosamine enolpyruvyl transferase</fullName>
        <shortName evidence="1">EPT</shortName>
    </alternativeName>
</protein>